<proteinExistence type="inferred from homology"/>
<gene>
    <name evidence="1" type="primary">rplC</name>
    <name type="ordered locus">NT01CX_1115</name>
</gene>
<reference key="1">
    <citation type="journal article" date="2006" name="Nat. Biotechnol.">
        <title>The genome and transcriptomes of the anti-tumor agent Clostridium novyi-NT.</title>
        <authorList>
            <person name="Bettegowda C."/>
            <person name="Huang X."/>
            <person name="Lin J."/>
            <person name="Cheong I."/>
            <person name="Kohli M."/>
            <person name="Szabo S.A."/>
            <person name="Zhang X."/>
            <person name="Diaz L.A. Jr."/>
            <person name="Velculescu V.E."/>
            <person name="Parmigiani G."/>
            <person name="Kinzler K.W."/>
            <person name="Vogelstein B."/>
            <person name="Zhou S."/>
        </authorList>
    </citation>
    <scope>NUCLEOTIDE SEQUENCE [LARGE SCALE GENOMIC DNA]</scope>
    <source>
        <strain>NT</strain>
    </source>
</reference>
<sequence length="209" mass="22834">MKKAIIGRKIGMTQIFDENGKVIPVTVVEAGPCAVLQKKTEEKDGYNAIQVGFEDIREKLANKPKKGHFAKAGVSLKRIVREFRLENIDEYEVGTEIKADVFAAGDKVDVTGVSKGKGFQGTIKRWNFHRGPMAHGSKYHRAVGSMGAASDPSRTFKNKKMPGHMGNKKSTILNIEVVKVMADKNVLLIKGGIPGPNKGYVVIKDTVKA</sequence>
<comment type="function">
    <text evidence="1">One of the primary rRNA binding proteins, it binds directly near the 3'-end of the 23S rRNA, where it nucleates assembly of the 50S subunit.</text>
</comment>
<comment type="subunit">
    <text evidence="1">Part of the 50S ribosomal subunit. Forms a cluster with proteins L14 and L19.</text>
</comment>
<comment type="similarity">
    <text evidence="1">Belongs to the universal ribosomal protein uL3 family.</text>
</comment>
<name>RL3_CLONN</name>
<accession>A0PXU6</accession>
<organism>
    <name type="scientific">Clostridium novyi (strain NT)</name>
    <dbReference type="NCBI Taxonomy" id="386415"/>
    <lineage>
        <taxon>Bacteria</taxon>
        <taxon>Bacillati</taxon>
        <taxon>Bacillota</taxon>
        <taxon>Clostridia</taxon>
        <taxon>Eubacteriales</taxon>
        <taxon>Clostridiaceae</taxon>
        <taxon>Clostridium</taxon>
    </lineage>
</organism>
<dbReference type="EMBL" id="CP000382">
    <property type="protein sequence ID" value="ABK61270.1"/>
    <property type="molecule type" value="Genomic_DNA"/>
</dbReference>
<dbReference type="RefSeq" id="WP_011721215.1">
    <property type="nucleotide sequence ID" value="NC_008593.1"/>
</dbReference>
<dbReference type="SMR" id="A0PXU6"/>
<dbReference type="STRING" id="386415.NT01CX_1115"/>
<dbReference type="KEGG" id="cno:NT01CX_1115"/>
<dbReference type="eggNOG" id="COG0087">
    <property type="taxonomic scope" value="Bacteria"/>
</dbReference>
<dbReference type="HOGENOM" id="CLU_044142_4_1_9"/>
<dbReference type="Proteomes" id="UP000008220">
    <property type="component" value="Chromosome"/>
</dbReference>
<dbReference type="GO" id="GO:0022625">
    <property type="term" value="C:cytosolic large ribosomal subunit"/>
    <property type="evidence" value="ECO:0007669"/>
    <property type="project" value="TreeGrafter"/>
</dbReference>
<dbReference type="GO" id="GO:0019843">
    <property type="term" value="F:rRNA binding"/>
    <property type="evidence" value="ECO:0007669"/>
    <property type="project" value="UniProtKB-UniRule"/>
</dbReference>
<dbReference type="GO" id="GO:0003735">
    <property type="term" value="F:structural constituent of ribosome"/>
    <property type="evidence" value="ECO:0007669"/>
    <property type="project" value="InterPro"/>
</dbReference>
<dbReference type="GO" id="GO:0006412">
    <property type="term" value="P:translation"/>
    <property type="evidence" value="ECO:0007669"/>
    <property type="project" value="UniProtKB-UniRule"/>
</dbReference>
<dbReference type="FunFam" id="2.40.30.10:FF:000004">
    <property type="entry name" value="50S ribosomal protein L3"/>
    <property type="match status" value="1"/>
</dbReference>
<dbReference type="FunFam" id="3.30.160.810:FF:000002">
    <property type="entry name" value="50S ribosomal protein L3"/>
    <property type="match status" value="1"/>
</dbReference>
<dbReference type="Gene3D" id="3.30.160.810">
    <property type="match status" value="1"/>
</dbReference>
<dbReference type="Gene3D" id="2.40.30.10">
    <property type="entry name" value="Translation factors"/>
    <property type="match status" value="1"/>
</dbReference>
<dbReference type="HAMAP" id="MF_01325_B">
    <property type="entry name" value="Ribosomal_uL3_B"/>
    <property type="match status" value="1"/>
</dbReference>
<dbReference type="InterPro" id="IPR000597">
    <property type="entry name" value="Ribosomal_uL3"/>
</dbReference>
<dbReference type="InterPro" id="IPR019927">
    <property type="entry name" value="Ribosomal_uL3_bac/org-type"/>
</dbReference>
<dbReference type="InterPro" id="IPR019926">
    <property type="entry name" value="Ribosomal_uL3_CS"/>
</dbReference>
<dbReference type="InterPro" id="IPR009000">
    <property type="entry name" value="Transl_B-barrel_sf"/>
</dbReference>
<dbReference type="NCBIfam" id="TIGR03625">
    <property type="entry name" value="L3_bact"/>
    <property type="match status" value="1"/>
</dbReference>
<dbReference type="PANTHER" id="PTHR11229">
    <property type="entry name" value="50S RIBOSOMAL PROTEIN L3"/>
    <property type="match status" value="1"/>
</dbReference>
<dbReference type="PANTHER" id="PTHR11229:SF16">
    <property type="entry name" value="LARGE RIBOSOMAL SUBUNIT PROTEIN UL3C"/>
    <property type="match status" value="1"/>
</dbReference>
<dbReference type="Pfam" id="PF00297">
    <property type="entry name" value="Ribosomal_L3"/>
    <property type="match status" value="1"/>
</dbReference>
<dbReference type="SUPFAM" id="SSF50447">
    <property type="entry name" value="Translation proteins"/>
    <property type="match status" value="1"/>
</dbReference>
<dbReference type="PROSITE" id="PS00474">
    <property type="entry name" value="RIBOSOMAL_L3"/>
    <property type="match status" value="1"/>
</dbReference>
<feature type="chain" id="PRO_1000052035" description="Large ribosomal subunit protein uL3">
    <location>
        <begin position="1"/>
        <end position="209"/>
    </location>
</feature>
<feature type="region of interest" description="Disordered" evidence="2">
    <location>
        <begin position="144"/>
        <end position="165"/>
    </location>
</feature>
<keyword id="KW-1185">Reference proteome</keyword>
<keyword id="KW-0687">Ribonucleoprotein</keyword>
<keyword id="KW-0689">Ribosomal protein</keyword>
<keyword id="KW-0694">RNA-binding</keyword>
<keyword id="KW-0699">rRNA-binding</keyword>
<evidence type="ECO:0000255" key="1">
    <source>
        <dbReference type="HAMAP-Rule" id="MF_01325"/>
    </source>
</evidence>
<evidence type="ECO:0000256" key="2">
    <source>
        <dbReference type="SAM" id="MobiDB-lite"/>
    </source>
</evidence>
<evidence type="ECO:0000305" key="3"/>
<protein>
    <recommendedName>
        <fullName evidence="1">Large ribosomal subunit protein uL3</fullName>
    </recommendedName>
    <alternativeName>
        <fullName evidence="3">50S ribosomal protein L3</fullName>
    </alternativeName>
</protein>